<evidence type="ECO:0000250" key="1"/>
<evidence type="ECO:0000250" key="2">
    <source>
        <dbReference type="UniProtKB" id="Q3UNH4"/>
    </source>
</evidence>
<evidence type="ECO:0000256" key="3">
    <source>
        <dbReference type="SAM" id="MobiDB-lite"/>
    </source>
</evidence>
<evidence type="ECO:0000269" key="4">
    <source>
    </source>
</evidence>
<evidence type="ECO:0000269" key="5">
    <source>
    </source>
</evidence>
<evidence type="ECO:0000269" key="6">
    <source>
    </source>
</evidence>
<evidence type="ECO:0000269" key="7">
    <source>
    </source>
</evidence>
<evidence type="ECO:0000303" key="8">
    <source>
    </source>
</evidence>
<evidence type="ECO:0000305" key="9"/>
<evidence type="ECO:0007744" key="10">
    <source>
    </source>
</evidence>
<sequence length="1008" mass="102399">MDTAEDPAWLQLLQKDSSPPGPRPTAFFCPQDGSLGAGSSAMRDYCPSQQKASPAPPRHTPDQSPGMESRHRSPSGAGEGASCSDGPRGSLACPSPTCFSPQESPSKETLEAHGASISGTPEATTSGKPEPVSSVKTEPKSSDDRNPMFLEKMDFKSSKQADSTSIGKEDPGSSRKADPMFTGKAEPEILGKGDPVAPGRMDPMTVRKEDLGSLGKVDPLCSSKTYTVSPRKEDPGSLRKVDPVSSDKVDPVFPRKEEPRYSGKEHPVSSEKVAPTSAEKVDLVLSGKRDPGPSGKADPMPLESMDSASTGKTEPGLLGKLIPGSSGKNGPVSSGTGAPGSLGRLDPTCLGMADPASVGNVETVPATKEDSRFLGKMDPASSGEGRPVSGHTDTTASAKTDLTSLKNVDPMSSGKVDPVSLGKMDPMCSGKPELLSPGQAERVSVGKAGTVSPGKEDPVSSRREDPISAGSRKTSSEKVNPESSGKTNPVSSGPGDPRSLGTAGPPSAVKAEPATGGKGDPLSSEKAGLVASGKAAPTASGKAEPLAVGKEDPVSKGKADAGPSGQGDSVSIGKVVSTPGKTVPVPSGKVDPVSLGKAEAIPEGKVGSLPLEKGSPVTTTKADPRASGKAQPQSGGKAETKLPGQEGAAAPGEAGAVCLKKETPQASEKVDPGSCRKAEPLASGKGEPVSLGKADSAPSRKTESPSLGKVVPLSLEKTKPSSSSRQLDRKALGSARSPEGARGSEGRVEPKAEPVSSTEASSLGQKDLEAAGAERSPCPEAAAPPPGPRTRDNFTKAPSWEASAPPPPREDAGTQAGAQACVSVAVSPMSPQDGAGGSAFSFQAAPRAPSPPSRRDAGLQVSLGAAETRSVATGPMTPQAAAPPAFPEVRVRPGSALAAAVAPPEPAEPVRDVSWDEKGMTWEVYGAAMEVEVLGMAIQKHLERQIEEHGRQGAPAPPPAARAGPGRSGSVRTAPPDGAAKRPPGLFRALLQSVRRPRCCSRAGPTAE</sequence>
<proteinExistence type="evidence at protein level"/>
<comment type="function">
    <text evidence="1">May be involved in neurite outgrowth.</text>
</comment>
<comment type="subunit">
    <text evidence="1">Interacts with activated forms of GNAI1, GNAO1 and GNAZ.</text>
</comment>
<comment type="interaction">
    <interactant intactId="EBI-11152848">
        <id>Q7Z2K8</id>
    </interactant>
    <interactant intactId="EBI-79422">
        <id>Q05941</id>
        <label>Chrna7</label>
    </interactant>
    <organismsDiffer>true</organismsDiffer>
    <experiments>6</experiments>
</comment>
<comment type="subcellular location">
    <subcellularLocation>
        <location evidence="1">Cell membrane</location>
        <topology evidence="1">Lipid-anchor</topology>
    </subcellularLocation>
    <subcellularLocation>
        <location evidence="1">Cell projection</location>
        <location evidence="1">Growth cone</location>
    </subcellularLocation>
    <text evidence="1">Highly enriched in growth cone.</text>
</comment>
<comment type="alternative products">
    <event type="alternative splicing"/>
    <isoform>
        <id>Q7Z2K8-1</id>
        <name>1</name>
        <sequence type="displayed"/>
    </isoform>
    <isoform>
        <id>Q7Z2K8-2</id>
        <name>2</name>
        <sequence type="described" ref="VSP_018546 VSP_018547"/>
    </isoform>
</comment>
<comment type="tissue specificity">
    <text evidence="4">Widely expressed in the central nervous system, with highest levels in spinal cord.</text>
</comment>
<comment type="PTM">
    <text evidence="1">Palmitoylation on Cys-999 and/or Cys-1000 is required for membrane targeting.</text>
</comment>
<comment type="sequence caution" evidence="9">
    <conflict type="erroneous initiation">
        <sequence resource="EMBL-CDS" id="BAB67786"/>
    </conflict>
    <text>Extended N-terminus.</text>
</comment>
<reference key="1">
    <citation type="journal article" date="2001" name="DNA Res.">
        <title>Prediction of the coding sequences of unidentified human genes. XXI. The complete sequences of 60 new cDNA clones from brain which code for large proteins.</title>
        <authorList>
            <person name="Nagase T."/>
            <person name="Kikuno R."/>
            <person name="Ohara O."/>
        </authorList>
    </citation>
    <scope>NUCLEOTIDE SEQUENCE [LARGE SCALE MRNA] (ISOFORM 2)</scope>
    <scope>VARIANT VAL-300</scope>
    <source>
        <tissue>Brain</tissue>
    </source>
</reference>
<reference key="2">
    <citation type="journal article" date="2004" name="Nature">
        <title>The DNA sequence and comparative analysis of human chromosome 5.</title>
        <authorList>
            <person name="Schmutz J."/>
            <person name="Martin J."/>
            <person name="Terry A."/>
            <person name="Couronne O."/>
            <person name="Grimwood J."/>
            <person name="Lowry S."/>
            <person name="Gordon L.A."/>
            <person name="Scott D."/>
            <person name="Xie G."/>
            <person name="Huang W."/>
            <person name="Hellsten U."/>
            <person name="Tran-Gyamfi M."/>
            <person name="She X."/>
            <person name="Prabhakar S."/>
            <person name="Aerts A."/>
            <person name="Altherr M."/>
            <person name="Bajorek E."/>
            <person name="Black S."/>
            <person name="Branscomb E."/>
            <person name="Caoile C."/>
            <person name="Challacombe J.F."/>
            <person name="Chan Y.M."/>
            <person name="Denys M."/>
            <person name="Detter J.C."/>
            <person name="Escobar J."/>
            <person name="Flowers D."/>
            <person name="Fotopulos D."/>
            <person name="Glavina T."/>
            <person name="Gomez M."/>
            <person name="Gonzales E."/>
            <person name="Goodstein D."/>
            <person name="Grigoriev I."/>
            <person name="Groza M."/>
            <person name="Hammon N."/>
            <person name="Hawkins T."/>
            <person name="Haydu L."/>
            <person name="Israni S."/>
            <person name="Jett J."/>
            <person name="Kadner K."/>
            <person name="Kimball H."/>
            <person name="Kobayashi A."/>
            <person name="Lopez F."/>
            <person name="Lou Y."/>
            <person name="Martinez D."/>
            <person name="Medina C."/>
            <person name="Morgan J."/>
            <person name="Nandkeshwar R."/>
            <person name="Noonan J.P."/>
            <person name="Pitluck S."/>
            <person name="Pollard M."/>
            <person name="Predki P."/>
            <person name="Priest J."/>
            <person name="Ramirez L."/>
            <person name="Retterer J."/>
            <person name="Rodriguez A."/>
            <person name="Rogers S."/>
            <person name="Salamov A."/>
            <person name="Salazar A."/>
            <person name="Thayer N."/>
            <person name="Tice H."/>
            <person name="Tsai M."/>
            <person name="Ustaszewska A."/>
            <person name="Vo N."/>
            <person name="Wheeler J."/>
            <person name="Wu K."/>
            <person name="Yang J."/>
            <person name="Dickson M."/>
            <person name="Cheng J.-F."/>
            <person name="Eichler E.E."/>
            <person name="Olsen A."/>
            <person name="Pennacchio L.A."/>
            <person name="Rokhsar D.S."/>
            <person name="Richardson P."/>
            <person name="Lucas S.M."/>
            <person name="Myers R.M."/>
            <person name="Rubin E.M."/>
        </authorList>
    </citation>
    <scope>NUCLEOTIDE SEQUENCE [LARGE SCALE GENOMIC DNA]</scope>
</reference>
<reference key="3">
    <citation type="journal article" date="2004" name="Genome Res.">
        <title>The status, quality, and expansion of the NIH full-length cDNA project: the Mammalian Gene Collection (MGC).</title>
        <authorList>
            <consortium name="The MGC Project Team"/>
        </authorList>
    </citation>
    <scope>NUCLEOTIDE SEQUENCE [LARGE SCALE MRNA] (ISOFORM 1)</scope>
    <scope>VARIANTS THR-121 AND VAL-300</scope>
    <source>
        <tissue>Testis</tissue>
    </source>
</reference>
<reference key="4">
    <citation type="journal article" date="2007" name="BMC Genomics">
        <title>The full-ORF clone resource of the German cDNA consortium.</title>
        <authorList>
            <person name="Bechtel S."/>
            <person name="Rosenfelder H."/>
            <person name="Duda A."/>
            <person name="Schmidt C.P."/>
            <person name="Ernst U."/>
            <person name="Wellenreuther R."/>
            <person name="Mehrle A."/>
            <person name="Schuster C."/>
            <person name="Bahr A."/>
            <person name="Bloecker H."/>
            <person name="Heubner D."/>
            <person name="Hoerlein A."/>
            <person name="Michel G."/>
            <person name="Wedler H."/>
            <person name="Koehrer K."/>
            <person name="Ottenwaelder B."/>
            <person name="Poustka A."/>
            <person name="Wiemann S."/>
            <person name="Schupp I."/>
        </authorList>
    </citation>
    <scope>NUCLEOTIDE SEQUENCE [LARGE SCALE MRNA] OF 183-897 (ISOFORM 1)</scope>
    <scope>VARIANT VAL-300</scope>
    <source>
        <tissue>Brain</tissue>
    </source>
</reference>
<reference key="5">
    <citation type="journal article" date="1999" name="J. Biol. Chem.">
        <title>A candidate target for G protein action in brain.</title>
        <authorList>
            <person name="Chen L.T."/>
            <person name="Gilman A.G."/>
            <person name="Kozasa T."/>
        </authorList>
    </citation>
    <scope>TISSUE SPECIFICITY</scope>
</reference>
<reference key="6">
    <citation type="journal article" date="2013" name="J. Proteome Res.">
        <title>Toward a comprehensive characterization of a human cancer cell phosphoproteome.</title>
        <authorList>
            <person name="Zhou H."/>
            <person name="Di Palma S."/>
            <person name="Preisinger C."/>
            <person name="Peng M."/>
            <person name="Polat A.N."/>
            <person name="Heck A.J."/>
            <person name="Mohammed S."/>
        </authorList>
    </citation>
    <scope>PHOSPHORYLATION [LARGE SCALE ANALYSIS] AT THR-60; SER-64; SER-75; SER-436; SER-452; SER-615; SER-737 AND SER-993</scope>
    <scope>IDENTIFICATION BY MASS SPECTROMETRY [LARGE SCALE ANALYSIS]</scope>
    <source>
        <tissue>Cervix carcinoma</tissue>
        <tissue>Erythroleukemia</tissue>
    </source>
</reference>
<feature type="chain" id="PRO_0000235977" description="G protein-regulated inducer of neurite outgrowth 1">
    <location>
        <begin position="1"/>
        <end position="1008"/>
    </location>
</feature>
<feature type="region of interest" description="Disordered" evidence="3">
    <location>
        <begin position="1"/>
        <end position="859"/>
    </location>
</feature>
<feature type="region of interest" description="Interaction with GNAO1" evidence="1">
    <location>
        <begin position="899"/>
        <end position="1008"/>
    </location>
</feature>
<feature type="region of interest" description="Disordered" evidence="3">
    <location>
        <begin position="943"/>
        <end position="986"/>
    </location>
</feature>
<feature type="compositionally biased region" description="Polar residues" evidence="3">
    <location>
        <begin position="117"/>
        <end position="127"/>
    </location>
</feature>
<feature type="compositionally biased region" description="Basic and acidic residues" evidence="3">
    <location>
        <begin position="137"/>
        <end position="159"/>
    </location>
</feature>
<feature type="compositionally biased region" description="Basic and acidic residues" evidence="3">
    <location>
        <begin position="167"/>
        <end position="178"/>
    </location>
</feature>
<feature type="compositionally biased region" description="Basic and acidic residues" evidence="3">
    <location>
        <begin position="230"/>
        <end position="269"/>
    </location>
</feature>
<feature type="compositionally biased region" description="Basic and acidic residues" evidence="3">
    <location>
        <begin position="279"/>
        <end position="291"/>
    </location>
</feature>
<feature type="compositionally biased region" description="Polar residues" evidence="3">
    <location>
        <begin position="326"/>
        <end position="336"/>
    </location>
</feature>
<feature type="compositionally biased region" description="Polar residues" evidence="3">
    <location>
        <begin position="391"/>
        <end position="406"/>
    </location>
</feature>
<feature type="compositionally biased region" description="Basic and acidic residues" evidence="3">
    <location>
        <begin position="454"/>
        <end position="466"/>
    </location>
</feature>
<feature type="compositionally biased region" description="Polar residues" evidence="3">
    <location>
        <begin position="481"/>
        <end position="491"/>
    </location>
</feature>
<feature type="compositionally biased region" description="Basic and acidic residues" evidence="3">
    <location>
        <begin position="549"/>
        <end position="559"/>
    </location>
</feature>
<feature type="compositionally biased region" description="Low complexity" evidence="3">
    <location>
        <begin position="643"/>
        <end position="656"/>
    </location>
</feature>
<feature type="compositionally biased region" description="Basic and acidic residues" evidence="3">
    <location>
        <begin position="659"/>
        <end position="679"/>
    </location>
</feature>
<feature type="compositionally biased region" description="Basic and acidic residues" evidence="3">
    <location>
        <begin position="742"/>
        <end position="752"/>
    </location>
</feature>
<feature type="compositionally biased region" description="Polar residues" evidence="3">
    <location>
        <begin position="755"/>
        <end position="764"/>
    </location>
</feature>
<feature type="compositionally biased region" description="Low complexity" evidence="3">
    <location>
        <begin position="838"/>
        <end position="847"/>
    </location>
</feature>
<feature type="modified residue" description="Phosphothreonine" evidence="10">
    <location>
        <position position="60"/>
    </location>
</feature>
<feature type="modified residue" description="Phosphoserine" evidence="10">
    <location>
        <position position="64"/>
    </location>
</feature>
<feature type="modified residue" description="Phosphoserine" evidence="10">
    <location>
        <position position="75"/>
    </location>
</feature>
<feature type="modified residue" description="Phosphoserine" evidence="2">
    <location>
        <position position="237"/>
    </location>
</feature>
<feature type="modified residue" description="Phosphoserine" evidence="10">
    <location>
        <position position="436"/>
    </location>
</feature>
<feature type="modified residue" description="Phosphoserine" evidence="10">
    <location>
        <position position="452"/>
    </location>
</feature>
<feature type="modified residue" description="Phosphoserine" evidence="10">
    <location>
        <position position="615"/>
    </location>
</feature>
<feature type="modified residue" description="Phosphoserine" evidence="10">
    <location>
        <position position="737"/>
    </location>
</feature>
<feature type="modified residue" description="Phosphoserine" evidence="2">
    <location>
        <position position="799"/>
    </location>
</feature>
<feature type="modified residue" description="Phosphothreonine" evidence="2">
    <location>
        <position position="877"/>
    </location>
</feature>
<feature type="modified residue" description="Phosphoserine" evidence="2">
    <location>
        <position position="895"/>
    </location>
</feature>
<feature type="modified residue" description="Phosphoserine" evidence="2">
    <location>
        <position position="914"/>
    </location>
</feature>
<feature type="modified residue" description="Phosphoserine" evidence="10">
    <location>
        <position position="993"/>
    </location>
</feature>
<feature type="lipid moiety-binding region" description="S-palmitoyl cysteine" evidence="1">
    <location>
        <position position="999"/>
    </location>
</feature>
<feature type="lipid moiety-binding region" description="S-palmitoyl cysteine" evidence="1">
    <location>
        <position position="1000"/>
    </location>
</feature>
<feature type="splice variant" id="VSP_018546" description="In isoform 2." evidence="8">
    <original>VEPKAEPVSSTEASSLGQKDLEAAGAERSPCPEAAAPPPGPRTRDNFTKAP</original>
    <variation>QASARPVPRAAAECAPAAVLLAGGTHGRVICPHFVRPSFRPSQAPFLITGP</variation>
    <location>
        <begin position="748"/>
        <end position="798"/>
    </location>
</feature>
<feature type="splice variant" id="VSP_018547" description="In isoform 2." evidence="8">
    <location>
        <begin position="799"/>
        <end position="1008"/>
    </location>
</feature>
<feature type="sequence variant" id="VAR_063136" description="In dbSNP:rs17854765." evidence="6">
    <original>P</original>
    <variation>T</variation>
    <location>
        <position position="121"/>
    </location>
</feature>
<feature type="sequence variant" id="VAR_063137" description="In dbSNP:rs6556276." evidence="5 6 7">
    <original>M</original>
    <variation>V</variation>
    <location>
        <position position="300"/>
    </location>
</feature>
<feature type="sequence variant" id="VAR_056902" description="In dbSNP:rs10037225.">
    <original>G</original>
    <variation>A</variation>
    <location>
        <position position="337"/>
    </location>
</feature>
<feature type="sequence variant" id="VAR_056903" description="In dbSNP:rs34285890.">
    <original>S</original>
    <variation>P</variation>
    <location>
        <position position="357"/>
    </location>
</feature>
<feature type="sequence conflict" description="In Ref. 4; CAD38868." evidence="9" ref="4">
    <location>
        <begin position="231"/>
        <end position="238"/>
    </location>
</feature>
<feature type="sequence conflict" description="In Ref. 4; CAD38868." evidence="9" ref="4">
    <original>P</original>
    <variation>A</variation>
    <location>
        <position position="680"/>
    </location>
</feature>
<protein>
    <recommendedName>
        <fullName>G protein-regulated inducer of neurite outgrowth 1</fullName>
        <shortName>GRIN1</shortName>
    </recommendedName>
</protein>
<dbReference type="EMBL" id="AB067480">
    <property type="protein sequence ID" value="BAB67786.1"/>
    <property type="status" value="ALT_INIT"/>
    <property type="molecule type" value="mRNA"/>
</dbReference>
<dbReference type="EMBL" id="AC091934">
    <property type="status" value="NOT_ANNOTATED_CDS"/>
    <property type="molecule type" value="Genomic_DNA"/>
</dbReference>
<dbReference type="EMBL" id="BC052950">
    <property type="protein sequence ID" value="AAH52950.1"/>
    <property type="molecule type" value="mRNA"/>
</dbReference>
<dbReference type="EMBL" id="AL834165">
    <property type="protein sequence ID" value="CAD38868.1"/>
    <property type="molecule type" value="mRNA"/>
</dbReference>
<dbReference type="CCDS" id="CCDS4405.1">
    <molecule id="Q7Z2K8-1"/>
</dbReference>
<dbReference type="RefSeq" id="NP_443131.2">
    <molecule id="Q7Z2K8-1"/>
    <property type="nucleotide sequence ID" value="NM_052899.3"/>
</dbReference>
<dbReference type="BioGRID" id="125349">
    <property type="interactions" value="91"/>
</dbReference>
<dbReference type="FunCoup" id="Q7Z2K8">
    <property type="interactions" value="681"/>
</dbReference>
<dbReference type="IntAct" id="Q7Z2K8">
    <property type="interactions" value="33"/>
</dbReference>
<dbReference type="MINT" id="Q7Z2K8"/>
<dbReference type="STRING" id="9606.ENSP00000305839"/>
<dbReference type="ChEMBL" id="CHEMBL5266"/>
<dbReference type="GlyCosmos" id="Q7Z2K8">
    <property type="glycosylation" value="2 sites, 1 glycan"/>
</dbReference>
<dbReference type="GlyGen" id="Q7Z2K8">
    <property type="glycosylation" value="4 sites, 1 O-linked glycan (2 sites)"/>
</dbReference>
<dbReference type="iPTMnet" id="Q7Z2K8"/>
<dbReference type="PhosphoSitePlus" id="Q7Z2K8"/>
<dbReference type="SwissPalm" id="Q7Z2K8"/>
<dbReference type="BioMuta" id="GPRIN1"/>
<dbReference type="DMDM" id="296434528"/>
<dbReference type="jPOST" id="Q7Z2K8"/>
<dbReference type="MassIVE" id="Q7Z2K8"/>
<dbReference type="PaxDb" id="9606-ENSP00000305839"/>
<dbReference type="PeptideAtlas" id="Q7Z2K8"/>
<dbReference type="ProteomicsDB" id="68962">
    <molecule id="Q7Z2K8-1"/>
</dbReference>
<dbReference type="ProteomicsDB" id="68963">
    <molecule id="Q7Z2K8-2"/>
</dbReference>
<dbReference type="Pumba" id="Q7Z2K8"/>
<dbReference type="Antibodypedia" id="45999">
    <property type="antibodies" value="115 antibodies from 25 providers"/>
</dbReference>
<dbReference type="DNASU" id="114787"/>
<dbReference type="Ensembl" id="ENST00000303991.5">
    <molecule id="Q7Z2K8-1"/>
    <property type="protein sequence ID" value="ENSP00000305839.4"/>
    <property type="gene ID" value="ENSG00000169258.7"/>
</dbReference>
<dbReference type="GeneID" id="114787"/>
<dbReference type="KEGG" id="hsa:114787"/>
<dbReference type="MANE-Select" id="ENST00000303991.5">
    <property type="protein sequence ID" value="ENSP00000305839.4"/>
    <property type="RefSeq nucleotide sequence ID" value="NM_052899.3"/>
    <property type="RefSeq protein sequence ID" value="NP_443131.2"/>
</dbReference>
<dbReference type="UCSC" id="uc003meo.2">
    <molecule id="Q7Z2K8-1"/>
    <property type="organism name" value="human"/>
</dbReference>
<dbReference type="AGR" id="HGNC:24835"/>
<dbReference type="CTD" id="114787"/>
<dbReference type="DisGeNET" id="114787"/>
<dbReference type="GeneCards" id="GPRIN1"/>
<dbReference type="HGNC" id="HGNC:24835">
    <property type="gene designation" value="GPRIN1"/>
</dbReference>
<dbReference type="HPA" id="ENSG00000169258">
    <property type="expression patterns" value="Tissue enhanced (brain, pituitary gland, retina)"/>
</dbReference>
<dbReference type="MIM" id="611239">
    <property type="type" value="gene"/>
</dbReference>
<dbReference type="neXtProt" id="NX_Q7Z2K8"/>
<dbReference type="OpenTargets" id="ENSG00000169258"/>
<dbReference type="PharmGKB" id="PA162390183"/>
<dbReference type="VEuPathDB" id="HostDB:ENSG00000169258"/>
<dbReference type="eggNOG" id="ENOG502S6S7">
    <property type="taxonomic scope" value="Eukaryota"/>
</dbReference>
<dbReference type="GeneTree" id="ENSGT00940000162796"/>
<dbReference type="HOGENOM" id="CLU_346336_0_0_1"/>
<dbReference type="InParanoid" id="Q7Z2K8"/>
<dbReference type="OMA" id="CCPSQQK"/>
<dbReference type="OrthoDB" id="9937185at2759"/>
<dbReference type="PAN-GO" id="Q7Z2K8">
    <property type="GO annotations" value="2 GO annotations based on evolutionary models"/>
</dbReference>
<dbReference type="PhylomeDB" id="Q7Z2K8"/>
<dbReference type="TreeFam" id="TF337047"/>
<dbReference type="PathwayCommons" id="Q7Z2K8"/>
<dbReference type="Reactome" id="R-HSA-9022699">
    <property type="pathway name" value="MECP2 regulates neuronal receptors and channels"/>
</dbReference>
<dbReference type="SignaLink" id="Q7Z2K8"/>
<dbReference type="SIGNOR" id="Q7Z2K8"/>
<dbReference type="BioGRID-ORCS" id="114787">
    <property type="hits" value="9 hits in 1153 CRISPR screens"/>
</dbReference>
<dbReference type="CD-CODE" id="FB4E32DD">
    <property type="entry name" value="Presynaptic clusters and postsynaptic densities"/>
</dbReference>
<dbReference type="ChiTaRS" id="GPRIN1">
    <property type="organism name" value="human"/>
</dbReference>
<dbReference type="GenomeRNAi" id="114787"/>
<dbReference type="Pharos" id="Q7Z2K8">
    <property type="development level" value="Tbio"/>
</dbReference>
<dbReference type="PRO" id="PR:Q7Z2K8"/>
<dbReference type="Proteomes" id="UP000005640">
    <property type="component" value="Chromosome 5"/>
</dbReference>
<dbReference type="RNAct" id="Q7Z2K8">
    <property type="molecule type" value="protein"/>
</dbReference>
<dbReference type="Bgee" id="ENSG00000169258">
    <property type="expression patterns" value="Expressed in cortical plate and 122 other cell types or tissues"/>
</dbReference>
<dbReference type="GO" id="GO:0030426">
    <property type="term" value="C:growth cone"/>
    <property type="evidence" value="ECO:0007669"/>
    <property type="project" value="UniProtKB-SubCell"/>
</dbReference>
<dbReference type="GO" id="GO:0005886">
    <property type="term" value="C:plasma membrane"/>
    <property type="evidence" value="ECO:0000318"/>
    <property type="project" value="GO_Central"/>
</dbReference>
<dbReference type="GO" id="GO:0051219">
    <property type="term" value="F:phosphoprotein binding"/>
    <property type="evidence" value="ECO:0007669"/>
    <property type="project" value="Ensembl"/>
</dbReference>
<dbReference type="GO" id="GO:0031175">
    <property type="term" value="P:neuron projection development"/>
    <property type="evidence" value="ECO:0000318"/>
    <property type="project" value="GO_Central"/>
</dbReference>
<dbReference type="InterPro" id="IPR026646">
    <property type="entry name" value="GPRIN2-like/GPRIN3"/>
</dbReference>
<dbReference type="InterPro" id="IPR032745">
    <property type="entry name" value="GRIN_C"/>
</dbReference>
<dbReference type="PANTHER" id="PTHR15718:SF7">
    <property type="entry name" value="G PROTEIN-REGULATED INDUCER OF NEURITE OUTGROWTH 1"/>
    <property type="match status" value="1"/>
</dbReference>
<dbReference type="PANTHER" id="PTHR15718">
    <property type="entry name" value="G PROTEIN-REGULATED INDUCER OF NEURITE OUTGROWTH C-TERMINAL DOMAIN-CONTAINING PROTEIN"/>
    <property type="match status" value="1"/>
</dbReference>
<dbReference type="Pfam" id="PF15235">
    <property type="entry name" value="GRIN_C"/>
    <property type="match status" value="1"/>
</dbReference>
<organism>
    <name type="scientific">Homo sapiens</name>
    <name type="common">Human</name>
    <dbReference type="NCBI Taxonomy" id="9606"/>
    <lineage>
        <taxon>Eukaryota</taxon>
        <taxon>Metazoa</taxon>
        <taxon>Chordata</taxon>
        <taxon>Craniata</taxon>
        <taxon>Vertebrata</taxon>
        <taxon>Euteleostomi</taxon>
        <taxon>Mammalia</taxon>
        <taxon>Eutheria</taxon>
        <taxon>Euarchontoglires</taxon>
        <taxon>Primates</taxon>
        <taxon>Haplorrhini</taxon>
        <taxon>Catarrhini</taxon>
        <taxon>Hominidae</taxon>
        <taxon>Homo</taxon>
    </lineage>
</organism>
<gene>
    <name type="primary">GPRIN1</name>
    <name type="synonym">KIAA1893</name>
</gene>
<accession>Q7Z2K8</accession>
<accession>C9JM70</accession>
<accession>Q8ND74</accession>
<accession>Q96PZ4</accession>
<keyword id="KW-0025">Alternative splicing</keyword>
<keyword id="KW-1003">Cell membrane</keyword>
<keyword id="KW-0966">Cell projection</keyword>
<keyword id="KW-0449">Lipoprotein</keyword>
<keyword id="KW-0472">Membrane</keyword>
<keyword id="KW-0564">Palmitate</keyword>
<keyword id="KW-0597">Phosphoprotein</keyword>
<keyword id="KW-1267">Proteomics identification</keyword>
<keyword id="KW-1185">Reference proteome</keyword>
<name>GRIN1_HUMAN</name>